<proteinExistence type="inferred from homology"/>
<feature type="chain" id="PRO_1000083781" description="ATP synthase gamma chain">
    <location>
        <begin position="1"/>
        <end position="289"/>
    </location>
</feature>
<sequence>MSKAREIRTKIASIKNTQKITRAMELVAASKMRKAQDRMAMSRPYASKIRKVISHVAASHAEYPHPYLQQRENIKRVGYIIVTTDRGLCGGLNVNLFRTAIADMKKWQADNIGMDLCVIGRKGEAFFRRYGGNVLAVADHLGDAPEVQDIIGIVKVMLDQYDKQQIDAIYIATNEFVNTMVQKPLVRQLLPLKTDEEEVEGGYWDYIYEPDESKDLLEMLLVRYIESQVYQAVIENIACEQSARMVAMKNATENAGQLIDELRLIYNKARQAGITREIAEIVAGAAAVE</sequence>
<evidence type="ECO:0000255" key="1">
    <source>
        <dbReference type="HAMAP-Rule" id="MF_00815"/>
    </source>
</evidence>
<reference key="1">
    <citation type="journal article" date="2009" name="Infect. Immun.">
        <title>Comparative genomics reveal extensive transposon-mediated genomic plasticity and diversity among potential effector proteins within the genus Coxiella.</title>
        <authorList>
            <person name="Beare P.A."/>
            <person name="Unsworth N."/>
            <person name="Andoh M."/>
            <person name="Voth D.E."/>
            <person name="Omsland A."/>
            <person name="Gilk S.D."/>
            <person name="Williams K.P."/>
            <person name="Sobral B.W."/>
            <person name="Kupko J.J. III"/>
            <person name="Porcella S.F."/>
            <person name="Samuel J.E."/>
            <person name="Heinzen R.A."/>
        </authorList>
    </citation>
    <scope>NUCLEOTIDE SEQUENCE [LARGE SCALE GENOMIC DNA]</scope>
    <source>
        <strain>Dugway 5J108-111</strain>
    </source>
</reference>
<organism>
    <name type="scientific">Coxiella burnetii (strain Dugway 5J108-111)</name>
    <dbReference type="NCBI Taxonomy" id="434922"/>
    <lineage>
        <taxon>Bacteria</taxon>
        <taxon>Pseudomonadati</taxon>
        <taxon>Pseudomonadota</taxon>
        <taxon>Gammaproteobacteria</taxon>
        <taxon>Legionellales</taxon>
        <taxon>Coxiellaceae</taxon>
        <taxon>Coxiella</taxon>
    </lineage>
</organism>
<dbReference type="EMBL" id="CP000733">
    <property type="protein sequence ID" value="ABS78386.1"/>
    <property type="molecule type" value="Genomic_DNA"/>
</dbReference>
<dbReference type="RefSeq" id="WP_010958556.1">
    <property type="nucleotide sequence ID" value="NC_009727.1"/>
</dbReference>
<dbReference type="SMR" id="A9KBF8"/>
<dbReference type="KEGG" id="cbd:CBUD_0177"/>
<dbReference type="HOGENOM" id="CLU_050669_0_1_6"/>
<dbReference type="Proteomes" id="UP000008555">
    <property type="component" value="Chromosome"/>
</dbReference>
<dbReference type="GO" id="GO:0005886">
    <property type="term" value="C:plasma membrane"/>
    <property type="evidence" value="ECO:0007669"/>
    <property type="project" value="UniProtKB-SubCell"/>
</dbReference>
<dbReference type="GO" id="GO:0045259">
    <property type="term" value="C:proton-transporting ATP synthase complex"/>
    <property type="evidence" value="ECO:0007669"/>
    <property type="project" value="UniProtKB-KW"/>
</dbReference>
<dbReference type="GO" id="GO:0005524">
    <property type="term" value="F:ATP binding"/>
    <property type="evidence" value="ECO:0007669"/>
    <property type="project" value="UniProtKB-UniRule"/>
</dbReference>
<dbReference type="GO" id="GO:0046933">
    <property type="term" value="F:proton-transporting ATP synthase activity, rotational mechanism"/>
    <property type="evidence" value="ECO:0007669"/>
    <property type="project" value="UniProtKB-UniRule"/>
</dbReference>
<dbReference type="GO" id="GO:0042777">
    <property type="term" value="P:proton motive force-driven plasma membrane ATP synthesis"/>
    <property type="evidence" value="ECO:0007669"/>
    <property type="project" value="UniProtKB-UniRule"/>
</dbReference>
<dbReference type="CDD" id="cd12151">
    <property type="entry name" value="F1-ATPase_gamma"/>
    <property type="match status" value="1"/>
</dbReference>
<dbReference type="FunFam" id="1.10.287.80:FF:000005">
    <property type="entry name" value="ATP synthase gamma chain"/>
    <property type="match status" value="1"/>
</dbReference>
<dbReference type="FunFam" id="3.40.1380.10:FF:000006">
    <property type="entry name" value="ATP synthase gamma chain"/>
    <property type="match status" value="1"/>
</dbReference>
<dbReference type="Gene3D" id="3.40.1380.10">
    <property type="match status" value="1"/>
</dbReference>
<dbReference type="Gene3D" id="1.10.287.80">
    <property type="entry name" value="ATP synthase, gamma subunit, helix hairpin domain"/>
    <property type="match status" value="1"/>
</dbReference>
<dbReference type="HAMAP" id="MF_00815">
    <property type="entry name" value="ATP_synth_gamma_bact"/>
    <property type="match status" value="1"/>
</dbReference>
<dbReference type="InterPro" id="IPR035968">
    <property type="entry name" value="ATP_synth_F1_ATPase_gsu"/>
</dbReference>
<dbReference type="InterPro" id="IPR000131">
    <property type="entry name" value="ATP_synth_F1_gsu"/>
</dbReference>
<dbReference type="InterPro" id="IPR023632">
    <property type="entry name" value="ATP_synth_F1_gsu_CS"/>
</dbReference>
<dbReference type="NCBIfam" id="TIGR01146">
    <property type="entry name" value="ATPsyn_F1gamma"/>
    <property type="match status" value="1"/>
</dbReference>
<dbReference type="NCBIfam" id="NF004144">
    <property type="entry name" value="PRK05621.1-1"/>
    <property type="match status" value="1"/>
</dbReference>
<dbReference type="PANTHER" id="PTHR11693">
    <property type="entry name" value="ATP SYNTHASE GAMMA CHAIN"/>
    <property type="match status" value="1"/>
</dbReference>
<dbReference type="PANTHER" id="PTHR11693:SF22">
    <property type="entry name" value="ATP SYNTHASE SUBUNIT GAMMA, MITOCHONDRIAL"/>
    <property type="match status" value="1"/>
</dbReference>
<dbReference type="Pfam" id="PF00231">
    <property type="entry name" value="ATP-synt"/>
    <property type="match status" value="1"/>
</dbReference>
<dbReference type="PRINTS" id="PR00126">
    <property type="entry name" value="ATPASEGAMMA"/>
</dbReference>
<dbReference type="SUPFAM" id="SSF52943">
    <property type="entry name" value="ATP synthase (F1-ATPase), gamma subunit"/>
    <property type="match status" value="1"/>
</dbReference>
<dbReference type="PROSITE" id="PS00153">
    <property type="entry name" value="ATPASE_GAMMA"/>
    <property type="match status" value="1"/>
</dbReference>
<comment type="function">
    <text evidence="1">Produces ATP from ADP in the presence of a proton gradient across the membrane. The gamma chain is believed to be important in regulating ATPase activity and the flow of protons through the CF(0) complex.</text>
</comment>
<comment type="subunit">
    <text evidence="1">F-type ATPases have 2 components, CF(1) - the catalytic core - and CF(0) - the membrane proton channel. CF(1) has five subunits: alpha(3), beta(3), gamma(1), delta(1), epsilon(1). CF(0) has three main subunits: a, b and c.</text>
</comment>
<comment type="subcellular location">
    <subcellularLocation>
        <location evidence="1">Cell inner membrane</location>
        <topology evidence="1">Peripheral membrane protein</topology>
    </subcellularLocation>
</comment>
<comment type="similarity">
    <text evidence="1">Belongs to the ATPase gamma chain family.</text>
</comment>
<keyword id="KW-0066">ATP synthesis</keyword>
<keyword id="KW-0997">Cell inner membrane</keyword>
<keyword id="KW-1003">Cell membrane</keyword>
<keyword id="KW-0139">CF(1)</keyword>
<keyword id="KW-0375">Hydrogen ion transport</keyword>
<keyword id="KW-0406">Ion transport</keyword>
<keyword id="KW-0472">Membrane</keyword>
<keyword id="KW-0813">Transport</keyword>
<gene>
    <name evidence="1" type="primary">atpG</name>
    <name type="ordered locus">CBUD_0177</name>
</gene>
<protein>
    <recommendedName>
        <fullName evidence="1">ATP synthase gamma chain</fullName>
    </recommendedName>
    <alternativeName>
        <fullName evidence="1">ATP synthase F1 sector gamma subunit</fullName>
    </alternativeName>
    <alternativeName>
        <fullName evidence="1">F-ATPase gamma subunit</fullName>
    </alternativeName>
</protein>
<name>ATPG_COXBN</name>
<accession>A9KBF8</accession>